<organism>
    <name type="scientific">Saccharomyces cerevisiae (strain ATCC 204508 / S288c)</name>
    <name type="common">Baker's yeast</name>
    <dbReference type="NCBI Taxonomy" id="559292"/>
    <lineage>
        <taxon>Eukaryota</taxon>
        <taxon>Fungi</taxon>
        <taxon>Dikarya</taxon>
        <taxon>Ascomycota</taxon>
        <taxon>Saccharomycotina</taxon>
        <taxon>Saccharomycetes</taxon>
        <taxon>Saccharomycetales</taxon>
        <taxon>Saccharomycetaceae</taxon>
        <taxon>Saccharomyces</taxon>
    </lineage>
</organism>
<feature type="chain" id="PRO_0000064174" description="Peptidyl-prolyl cis-trans isomerase CYP7">
    <location>
        <begin position="1"/>
        <end position="393"/>
    </location>
</feature>
<feature type="domain" description="PPIase cyclophilin-type" evidence="1">
    <location>
        <begin position="8"/>
        <end position="196"/>
    </location>
</feature>
<feature type="repeat" description="TPR 1">
    <location>
        <begin position="240"/>
        <end position="273"/>
    </location>
</feature>
<feature type="repeat" description="TPR 2">
    <location>
        <begin position="292"/>
        <end position="325"/>
    </location>
</feature>
<feature type="repeat" description="TPR 3">
    <location>
        <begin position="330"/>
        <end position="363"/>
    </location>
</feature>
<feature type="sequence conflict" description="In Ref. 1; AAC49415." evidence="3" ref="1">
    <original>L</original>
    <variation>F</variation>
    <location>
        <position position="237"/>
    </location>
</feature>
<feature type="strand" evidence="4">
    <location>
        <begin position="6"/>
        <end position="13"/>
    </location>
</feature>
<feature type="strand" evidence="4">
    <location>
        <begin position="16"/>
        <end position="25"/>
    </location>
</feature>
<feature type="turn" evidence="4">
    <location>
        <begin position="27"/>
        <end position="29"/>
    </location>
</feature>
<feature type="helix" evidence="4">
    <location>
        <begin position="31"/>
        <end position="42"/>
    </location>
</feature>
<feature type="strand" evidence="4">
    <location>
        <begin position="48"/>
        <end position="50"/>
    </location>
</feature>
<feature type="strand" evidence="4">
    <location>
        <begin position="61"/>
        <end position="66"/>
    </location>
</feature>
<feature type="turn" evidence="4">
    <location>
        <begin position="67"/>
        <end position="69"/>
    </location>
</feature>
<feature type="strand" evidence="4">
    <location>
        <begin position="70"/>
        <end position="73"/>
    </location>
</feature>
<feature type="turn" evidence="4">
    <location>
        <begin position="76"/>
        <end position="78"/>
    </location>
</feature>
<feature type="strand" evidence="4">
    <location>
        <begin position="79"/>
        <end position="81"/>
    </location>
</feature>
<feature type="turn" evidence="4">
    <location>
        <begin position="87"/>
        <end position="90"/>
    </location>
</feature>
<feature type="helix" evidence="4">
    <location>
        <begin position="100"/>
        <end position="105"/>
    </location>
</feature>
<feature type="strand" evidence="4">
    <location>
        <begin position="111"/>
        <end position="113"/>
    </location>
</feature>
<feature type="strand" evidence="4">
    <location>
        <begin position="125"/>
        <end position="131"/>
    </location>
</feature>
<feature type="strand" evidence="4">
    <location>
        <begin position="134"/>
        <end position="136"/>
    </location>
</feature>
<feature type="strand" evidence="4">
    <location>
        <begin position="140"/>
        <end position="142"/>
    </location>
</feature>
<feature type="strand" evidence="4">
    <location>
        <begin position="144"/>
        <end position="149"/>
    </location>
</feature>
<feature type="helix" evidence="4">
    <location>
        <begin position="152"/>
        <end position="154"/>
    </location>
</feature>
<feature type="turn" evidence="4">
    <location>
        <begin position="155"/>
        <end position="157"/>
    </location>
</feature>
<feature type="strand" evidence="4">
    <location>
        <begin position="160"/>
        <end position="166"/>
    </location>
</feature>
<feature type="helix" evidence="4">
    <location>
        <begin position="168"/>
        <end position="175"/>
    </location>
</feature>
<feature type="strand" evidence="4">
    <location>
        <begin position="185"/>
        <end position="187"/>
    </location>
</feature>
<feature type="strand" evidence="4">
    <location>
        <begin position="189"/>
        <end position="196"/>
    </location>
</feature>
<feature type="helix" evidence="4">
    <location>
        <begin position="199"/>
        <end position="201"/>
    </location>
</feature>
<feature type="strand" evidence="4">
    <location>
        <begin position="205"/>
        <end position="208"/>
    </location>
</feature>
<feature type="helix" evidence="4">
    <location>
        <begin position="213"/>
        <end position="215"/>
    </location>
</feature>
<feature type="helix" evidence="4">
    <location>
        <begin position="222"/>
        <end position="224"/>
    </location>
</feature>
<feature type="helix" evidence="4">
    <location>
        <begin position="233"/>
        <end position="252"/>
    </location>
</feature>
<feature type="helix" evidence="4">
    <location>
        <begin position="256"/>
        <end position="273"/>
    </location>
</feature>
<feature type="turn" evidence="4">
    <location>
        <begin position="277"/>
        <end position="279"/>
    </location>
</feature>
<feature type="helix" evidence="4">
    <location>
        <begin position="281"/>
        <end position="304"/>
    </location>
</feature>
<feature type="helix" evidence="4">
    <location>
        <begin position="308"/>
        <end position="319"/>
    </location>
</feature>
<feature type="helix" evidence="4">
    <location>
        <begin position="326"/>
        <end position="342"/>
    </location>
</feature>
<feature type="helix" evidence="4">
    <location>
        <begin position="346"/>
        <end position="359"/>
    </location>
</feature>
<feature type="helix" evidence="4">
    <location>
        <begin position="366"/>
        <end position="385"/>
    </location>
</feature>
<gene>
    <name type="primary">CPR7</name>
    <name type="ordered locus">YJR032W</name>
    <name type="ORF">J1585</name>
</gene>
<keyword id="KW-0002">3D-structure</keyword>
<keyword id="KW-0413">Isomerase</keyword>
<keyword id="KW-1185">Reference proteome</keyword>
<keyword id="KW-0677">Repeat</keyword>
<keyword id="KW-0697">Rotamase</keyword>
<keyword id="KW-0802">TPR repeat</keyword>
<proteinExistence type="evidence at protein level"/>
<name>CYP7_YEAST</name>
<reference key="1">
    <citation type="journal article" date="1996" name="Yeast">
        <title>Identification of two CyP-40-like cyclophilins in Saccharomyces cerevisiae, one of which is required for normal growth.</title>
        <authorList>
            <person name="Duina A.A."/>
            <person name="Marsh J.A."/>
            <person name="Gaber R.F."/>
        </authorList>
    </citation>
    <scope>NUCLEOTIDE SEQUENCE [GENOMIC DNA]</scope>
</reference>
<reference key="2">
    <citation type="journal article" date="1995" name="Yeast">
        <title>The sequence of 24.3 kb from chromosome X reveals five complete open reading frames, all of which correspond to new genes, and a tandem insertion of a Ty1 transposon.</title>
        <authorList>
            <person name="Zagulski M."/>
            <person name="Babinska B."/>
            <person name="Gromadka R."/>
            <person name="Migdalski A."/>
            <person name="Rytka J."/>
            <person name="Sulicka J."/>
            <person name="Herbert C.J."/>
        </authorList>
    </citation>
    <scope>NUCLEOTIDE SEQUENCE [GENOMIC DNA]</scope>
</reference>
<reference key="3">
    <citation type="journal article" date="1996" name="EMBO J.">
        <title>Complete nucleotide sequence of Saccharomyces cerevisiae chromosome X.</title>
        <authorList>
            <person name="Galibert F."/>
            <person name="Alexandraki D."/>
            <person name="Baur A."/>
            <person name="Boles E."/>
            <person name="Chalwatzis N."/>
            <person name="Chuat J.-C."/>
            <person name="Coster F."/>
            <person name="Cziepluch C."/>
            <person name="de Haan M."/>
            <person name="Domdey H."/>
            <person name="Durand P."/>
            <person name="Entian K.-D."/>
            <person name="Gatius M."/>
            <person name="Goffeau A."/>
            <person name="Grivell L.A."/>
            <person name="Hennemann A."/>
            <person name="Herbert C.J."/>
            <person name="Heumann K."/>
            <person name="Hilger F."/>
            <person name="Hollenberg C.P."/>
            <person name="Huang M.-E."/>
            <person name="Jacq C."/>
            <person name="Jauniaux J.-C."/>
            <person name="Katsoulou C."/>
            <person name="Kirchrath L."/>
            <person name="Kleine K."/>
            <person name="Kordes E."/>
            <person name="Koetter P."/>
            <person name="Liebl S."/>
            <person name="Louis E.J."/>
            <person name="Manus V."/>
            <person name="Mewes H.-W."/>
            <person name="Miosga T."/>
            <person name="Obermaier B."/>
            <person name="Perea J."/>
            <person name="Pohl T.M."/>
            <person name="Portetelle D."/>
            <person name="Pujol A."/>
            <person name="Purnelle B."/>
            <person name="Ramezani Rad M."/>
            <person name="Rasmussen S.W."/>
            <person name="Rose M."/>
            <person name="Rossau R."/>
            <person name="Schaaff-Gerstenschlaeger I."/>
            <person name="Smits P.H.M."/>
            <person name="Scarcez T."/>
            <person name="Soriano N."/>
            <person name="To Van D."/>
            <person name="Tzermia M."/>
            <person name="Van Broekhoven A."/>
            <person name="Vandenbol M."/>
            <person name="Wedler H."/>
            <person name="von Wettstein D."/>
            <person name="Wambutt R."/>
            <person name="Zagulski M."/>
            <person name="Zollner A."/>
            <person name="Karpfinger-Hartl L."/>
        </authorList>
    </citation>
    <scope>NUCLEOTIDE SEQUENCE [LARGE SCALE GENOMIC DNA]</scope>
    <source>
        <strain>ATCC 204508 / S288c</strain>
    </source>
</reference>
<reference key="4">
    <citation type="journal article" date="2014" name="G3 (Bethesda)">
        <title>The reference genome sequence of Saccharomyces cerevisiae: Then and now.</title>
        <authorList>
            <person name="Engel S.R."/>
            <person name="Dietrich F.S."/>
            <person name="Fisk D.G."/>
            <person name="Binkley G."/>
            <person name="Balakrishnan R."/>
            <person name="Costanzo M.C."/>
            <person name="Dwight S.S."/>
            <person name="Hitz B.C."/>
            <person name="Karra K."/>
            <person name="Nash R.S."/>
            <person name="Weng S."/>
            <person name="Wong E.D."/>
            <person name="Lloyd P."/>
            <person name="Skrzypek M.S."/>
            <person name="Miyasato S.R."/>
            <person name="Simison M."/>
            <person name="Cherry J.M."/>
        </authorList>
    </citation>
    <scope>GENOME REANNOTATION</scope>
    <source>
        <strain>ATCC 204508 / S288c</strain>
    </source>
</reference>
<reference key="5">
    <citation type="journal article" date="2007" name="Genome Res.">
        <title>Approaching a complete repository of sequence-verified protein-encoding clones for Saccharomyces cerevisiae.</title>
        <authorList>
            <person name="Hu Y."/>
            <person name="Rolfs A."/>
            <person name="Bhullar B."/>
            <person name="Murthy T.V.S."/>
            <person name="Zhu C."/>
            <person name="Berger M.F."/>
            <person name="Camargo A.A."/>
            <person name="Kelley F."/>
            <person name="McCarron S."/>
            <person name="Jepson D."/>
            <person name="Richardson A."/>
            <person name="Raphael J."/>
            <person name="Moreira D."/>
            <person name="Taycher E."/>
            <person name="Zuo D."/>
            <person name="Mohr S."/>
            <person name="Kane M.F."/>
            <person name="Williamson J."/>
            <person name="Simpson A.J.G."/>
            <person name="Bulyk M.L."/>
            <person name="Harlow E."/>
            <person name="Marsischky G."/>
            <person name="Kolodner R.D."/>
            <person name="LaBaer J."/>
        </authorList>
    </citation>
    <scope>NUCLEOTIDE SEQUENCE [GENOMIC DNA]</scope>
    <source>
        <strain>ATCC 204508 / S288c</strain>
    </source>
</reference>
<reference key="6">
    <citation type="journal article" date="2003" name="Nature">
        <title>Global analysis of protein expression in yeast.</title>
        <authorList>
            <person name="Ghaemmaghami S."/>
            <person name="Huh W.-K."/>
            <person name="Bower K."/>
            <person name="Howson R.W."/>
            <person name="Belle A."/>
            <person name="Dephoure N."/>
            <person name="O'Shea E.K."/>
            <person name="Weissman J.S."/>
        </authorList>
    </citation>
    <scope>LEVEL OF PROTEIN EXPRESSION [LARGE SCALE ANALYSIS]</scope>
</reference>
<accession>P47103</accession>
<accession>D6VWK5</accession>
<accession>Q92323</accession>
<protein>
    <recommendedName>
        <fullName>Peptidyl-prolyl cis-trans isomerase CYP7</fullName>
        <shortName>PPIase CYP7</shortName>
        <ecNumber>5.2.1.8</ecNumber>
    </recommendedName>
    <alternativeName>
        <fullName>Rotamase CYP7</fullName>
    </alternativeName>
</protein>
<evidence type="ECO:0000255" key="1">
    <source>
        <dbReference type="PROSITE-ProRule" id="PRU00156"/>
    </source>
</evidence>
<evidence type="ECO:0000269" key="2">
    <source>
    </source>
</evidence>
<evidence type="ECO:0000305" key="3"/>
<evidence type="ECO:0007829" key="4">
    <source>
        <dbReference type="PDB" id="5JHE"/>
    </source>
</evidence>
<dbReference type="EC" id="5.2.1.8"/>
<dbReference type="EMBL" id="U48868">
    <property type="protein sequence ID" value="AAC49415.1"/>
    <property type="molecule type" value="Genomic_DNA"/>
</dbReference>
<dbReference type="EMBL" id="Z49532">
    <property type="protein sequence ID" value="CAA89559.1"/>
    <property type="molecule type" value="Genomic_DNA"/>
</dbReference>
<dbReference type="EMBL" id="X87297">
    <property type="protein sequence ID" value="CAA60725.1"/>
    <property type="molecule type" value="Genomic_DNA"/>
</dbReference>
<dbReference type="EMBL" id="AY693103">
    <property type="protein sequence ID" value="AAT93122.1"/>
    <property type="molecule type" value="Genomic_DNA"/>
</dbReference>
<dbReference type="EMBL" id="BK006943">
    <property type="protein sequence ID" value="DAA08821.1"/>
    <property type="molecule type" value="Genomic_DNA"/>
</dbReference>
<dbReference type="PIR" id="S57050">
    <property type="entry name" value="S57050"/>
</dbReference>
<dbReference type="RefSeq" id="NP_012566.1">
    <property type="nucleotide sequence ID" value="NM_001181690.1"/>
</dbReference>
<dbReference type="PDB" id="5JHE">
    <property type="method" value="X-ray"/>
    <property type="resolution" value="1.80 A"/>
    <property type="chains" value="A=1-393"/>
</dbReference>
<dbReference type="PDBsum" id="5JHE"/>
<dbReference type="SMR" id="P47103"/>
<dbReference type="BioGRID" id="33785">
    <property type="interactions" value="356"/>
</dbReference>
<dbReference type="DIP" id="DIP-2312N"/>
<dbReference type="FunCoup" id="P47103">
    <property type="interactions" value="97"/>
</dbReference>
<dbReference type="IntAct" id="P47103">
    <property type="interactions" value="11"/>
</dbReference>
<dbReference type="MINT" id="P47103"/>
<dbReference type="STRING" id="4932.YJR032W"/>
<dbReference type="iPTMnet" id="P47103"/>
<dbReference type="PaxDb" id="4932-YJR032W"/>
<dbReference type="PeptideAtlas" id="P47103"/>
<dbReference type="EnsemblFungi" id="YJR032W_mRNA">
    <property type="protein sequence ID" value="YJR032W"/>
    <property type="gene ID" value="YJR032W"/>
</dbReference>
<dbReference type="GeneID" id="853489"/>
<dbReference type="KEGG" id="sce:YJR032W"/>
<dbReference type="AGR" id="SGD:S000003793"/>
<dbReference type="SGD" id="S000003793">
    <property type="gene designation" value="CPR7"/>
</dbReference>
<dbReference type="VEuPathDB" id="FungiDB:YJR032W"/>
<dbReference type="eggNOG" id="KOG0546">
    <property type="taxonomic scope" value="Eukaryota"/>
</dbReference>
<dbReference type="HOGENOM" id="CLU_012062_37_0_1"/>
<dbReference type="InParanoid" id="P47103"/>
<dbReference type="OMA" id="QFFITTY"/>
<dbReference type="OrthoDB" id="407558at2759"/>
<dbReference type="BioCyc" id="YEAST:YJR032W-MONOMER"/>
<dbReference type="BioGRID-ORCS" id="853489">
    <property type="hits" value="1 hit in 10 CRISPR screens"/>
</dbReference>
<dbReference type="PRO" id="PR:P47103"/>
<dbReference type="Proteomes" id="UP000002311">
    <property type="component" value="Chromosome X"/>
</dbReference>
<dbReference type="RNAct" id="P47103">
    <property type="molecule type" value="protein"/>
</dbReference>
<dbReference type="GO" id="GO:0005737">
    <property type="term" value="C:cytoplasm"/>
    <property type="evidence" value="ECO:0000318"/>
    <property type="project" value="GO_Central"/>
</dbReference>
<dbReference type="GO" id="GO:0005829">
    <property type="term" value="C:cytosol"/>
    <property type="evidence" value="ECO:0000353"/>
    <property type="project" value="SGD"/>
</dbReference>
<dbReference type="GO" id="GO:0016018">
    <property type="term" value="F:cyclosporin A binding"/>
    <property type="evidence" value="ECO:0000318"/>
    <property type="project" value="GO_Central"/>
</dbReference>
<dbReference type="GO" id="GO:0003755">
    <property type="term" value="F:peptidyl-prolyl cis-trans isomerase activity"/>
    <property type="evidence" value="ECO:0000314"/>
    <property type="project" value="SGD"/>
</dbReference>
<dbReference type="GO" id="GO:0051082">
    <property type="term" value="F:unfolded protein binding"/>
    <property type="evidence" value="ECO:0000314"/>
    <property type="project" value="SGD"/>
</dbReference>
<dbReference type="GO" id="GO:0006457">
    <property type="term" value="P:protein folding"/>
    <property type="evidence" value="ECO:0000318"/>
    <property type="project" value="GO_Central"/>
</dbReference>
<dbReference type="GO" id="GO:0042026">
    <property type="term" value="P:protein refolding"/>
    <property type="evidence" value="ECO:0000314"/>
    <property type="project" value="SGD"/>
</dbReference>
<dbReference type="FunFam" id="2.40.100.10:FF:000044">
    <property type="entry name" value="Cyclophilin 40"/>
    <property type="match status" value="1"/>
</dbReference>
<dbReference type="FunFam" id="1.25.40.10:FF:000029">
    <property type="entry name" value="peptidyl-prolyl cis-trans isomerase D"/>
    <property type="match status" value="1"/>
</dbReference>
<dbReference type="Gene3D" id="2.40.100.10">
    <property type="entry name" value="Cyclophilin-like"/>
    <property type="match status" value="1"/>
</dbReference>
<dbReference type="Gene3D" id="1.25.40.10">
    <property type="entry name" value="Tetratricopeptide repeat domain"/>
    <property type="match status" value="1"/>
</dbReference>
<dbReference type="InterPro" id="IPR029000">
    <property type="entry name" value="Cyclophilin-like_dom_sf"/>
</dbReference>
<dbReference type="InterPro" id="IPR020892">
    <property type="entry name" value="Cyclophilin-type_PPIase_CS"/>
</dbReference>
<dbReference type="InterPro" id="IPR002130">
    <property type="entry name" value="Cyclophilin-type_PPIase_dom"/>
</dbReference>
<dbReference type="InterPro" id="IPR011990">
    <property type="entry name" value="TPR-like_helical_dom_sf"/>
</dbReference>
<dbReference type="InterPro" id="IPR019734">
    <property type="entry name" value="TPR_rpt"/>
</dbReference>
<dbReference type="PANTHER" id="PTHR11071">
    <property type="entry name" value="PEPTIDYL-PROLYL CIS-TRANS ISOMERASE"/>
    <property type="match status" value="1"/>
</dbReference>
<dbReference type="PANTHER" id="PTHR11071:SF561">
    <property type="entry name" value="PEPTIDYL-PROLYL CIS-TRANS ISOMERASE D-RELATED"/>
    <property type="match status" value="1"/>
</dbReference>
<dbReference type="Pfam" id="PF00160">
    <property type="entry name" value="Pro_isomerase"/>
    <property type="match status" value="1"/>
</dbReference>
<dbReference type="Pfam" id="PF00515">
    <property type="entry name" value="TPR_1"/>
    <property type="match status" value="1"/>
</dbReference>
<dbReference type="PRINTS" id="PR00153">
    <property type="entry name" value="CSAPPISMRASE"/>
</dbReference>
<dbReference type="SMART" id="SM00028">
    <property type="entry name" value="TPR"/>
    <property type="match status" value="3"/>
</dbReference>
<dbReference type="SUPFAM" id="SSF50891">
    <property type="entry name" value="Cyclophilin-like"/>
    <property type="match status" value="1"/>
</dbReference>
<dbReference type="SUPFAM" id="SSF48452">
    <property type="entry name" value="TPR-like"/>
    <property type="match status" value="1"/>
</dbReference>
<dbReference type="PROSITE" id="PS00170">
    <property type="entry name" value="CSA_PPIASE_1"/>
    <property type="match status" value="1"/>
</dbReference>
<dbReference type="PROSITE" id="PS50072">
    <property type="entry name" value="CSA_PPIASE_2"/>
    <property type="match status" value="1"/>
</dbReference>
<dbReference type="PROSITE" id="PS50005">
    <property type="entry name" value="TPR"/>
    <property type="match status" value="3"/>
</dbReference>
<dbReference type="PROSITE" id="PS50293">
    <property type="entry name" value="TPR_REGION"/>
    <property type="match status" value="1"/>
</dbReference>
<comment type="function">
    <text>PPIases accelerate the folding of proteins. It catalyzes the cis-trans isomerization of proline imidic peptide bonds in oligopeptides. Plays a major role in negative regulation of the heat shock transcription factor (HSF).</text>
</comment>
<comment type="catalytic activity">
    <reaction>
        <text>[protein]-peptidylproline (omega=180) = [protein]-peptidylproline (omega=0)</text>
        <dbReference type="Rhea" id="RHEA:16237"/>
        <dbReference type="Rhea" id="RHEA-COMP:10747"/>
        <dbReference type="Rhea" id="RHEA-COMP:10748"/>
        <dbReference type="ChEBI" id="CHEBI:83833"/>
        <dbReference type="ChEBI" id="CHEBI:83834"/>
        <dbReference type="EC" id="5.2.1.8"/>
    </reaction>
</comment>
<comment type="subunit">
    <text>Interacts with RPD3 and CNS1.</text>
</comment>
<comment type="interaction">
    <interactant intactId="EBI-5436">
        <id>P47103</id>
    </interactant>
    <interactant intactId="EBI-4806">
        <id>P33313</id>
        <label>CNS1</label>
    </interactant>
    <organismsDiffer>false</organismsDiffer>
    <experiments>2</experiments>
</comment>
<comment type="interaction">
    <interactant intactId="EBI-5436">
        <id>P47103</id>
    </interactant>
    <interactant intactId="EBI-8666">
        <id>P15108</id>
        <label>HSC82</label>
    </interactant>
    <organismsDiffer>false</organismsDiffer>
    <experiments>2</experiments>
</comment>
<comment type="interaction">
    <interactant intactId="EBI-5436">
        <id>P47103</id>
    </interactant>
    <interactant intactId="EBI-8659">
        <id>P02829</id>
        <label>HSP82</label>
    </interactant>
    <organismsDiffer>false</organismsDiffer>
    <experiments>6</experiments>
</comment>
<comment type="interaction">
    <interactant intactId="EBI-5436">
        <id>P47103</id>
    </interactant>
    <interactant intactId="EBI-15864">
        <id>P32561</id>
        <label>RPD3</label>
    </interactant>
    <organismsDiffer>false</organismsDiffer>
    <experiments>2</experiments>
</comment>
<comment type="miscellaneous">
    <text evidence="2">Present with 3230 molecules/cell in log phase SD medium.</text>
</comment>
<sequence>MIQDPLVYLDISIDKKPIGRIVCKLFREKAPKTTENFYKLCAGDVKSPLKDQQYLSYKGNGFHRVVKNFMIQAGDIVFGTQKDSSSSSVGKGGCSIYADKEEVKTDDESFCYGNFEDENLGEFVEPFTLGMANLGSPNTNNSQFFITTYAAPHLNGKHSIFGQVVHGKSVVRTIENCRVDSDGVPESDVRISDCGVWEKTMGVPLYNASNDQIGGDVYEEYPDDDTHFGDDDFGKALEAANIIKESGTLLFKKKDYSNAFFKYRKSLNYINEYMPEPDVDKERNIQFINLKMKIYLNLSLVLFNLERYDDAIMYATYLLEMDNVPNRDQAKAYYRRGNSYLKKKRLDEALQDYIFCKEKNPDDEVIEQRIEYVNRLIEENKEKTRKNISKFFS</sequence>